<organism>
    <name type="scientific">Brucella suis biovar 1 (strain 1330)</name>
    <dbReference type="NCBI Taxonomy" id="204722"/>
    <lineage>
        <taxon>Bacteria</taxon>
        <taxon>Pseudomonadati</taxon>
        <taxon>Pseudomonadota</taxon>
        <taxon>Alphaproteobacteria</taxon>
        <taxon>Hyphomicrobiales</taxon>
        <taxon>Brucellaceae</taxon>
        <taxon>Brucella/Ochrobactrum group</taxon>
        <taxon>Brucella</taxon>
    </lineage>
</organism>
<proteinExistence type="inferred from homology"/>
<protein>
    <recommendedName>
        <fullName evidence="1">Transcription antitermination protein NusB</fullName>
    </recommendedName>
    <alternativeName>
        <fullName evidence="1">Antitermination factor NusB</fullName>
    </alternativeName>
</protein>
<accession>Q8G1E7</accession>
<accession>G0K8I9</accession>
<sequence>MNSIPEGRPTPNLPRTANKRGVARLAAVQALYQMDVAGTGVMEVVAEYEAFRLGKEVDGTQYLDADPQWFRAIVAGVVEDQLKLDPMIHQALTEDWPLSRLDSTLRAILRAGAWELKARKDVPTAVIVSEYVDIAKAFYTEDEPKLVNAVLDRLALVIRGESRGAKPRHKS</sequence>
<name>NUSB_BRUSU</name>
<feature type="chain" id="PRO_0000176516" description="Transcription antitermination protein NusB">
    <location>
        <begin position="1"/>
        <end position="171"/>
    </location>
</feature>
<gene>
    <name evidence="1" type="primary">nusB</name>
    <name type="ordered locus">BR0770</name>
    <name type="ordered locus">BS1330_I0766</name>
</gene>
<keyword id="KW-0694">RNA-binding</keyword>
<keyword id="KW-0804">Transcription</keyword>
<keyword id="KW-0889">Transcription antitermination</keyword>
<keyword id="KW-0805">Transcription regulation</keyword>
<dbReference type="EMBL" id="AE014291">
    <property type="protein sequence ID" value="AAN29699.1"/>
    <property type="molecule type" value="Genomic_DNA"/>
</dbReference>
<dbReference type="EMBL" id="CP002997">
    <property type="protein sequence ID" value="AEM18116.1"/>
    <property type="molecule type" value="Genomic_DNA"/>
</dbReference>
<dbReference type="RefSeq" id="WP_004688221.1">
    <property type="nucleotide sequence ID" value="NZ_KN046804.1"/>
</dbReference>
<dbReference type="SMR" id="Q8G1E7"/>
<dbReference type="GeneID" id="97533920"/>
<dbReference type="KEGG" id="bms:BR0770"/>
<dbReference type="KEGG" id="bsi:BS1330_I0766"/>
<dbReference type="PATRIC" id="fig|204722.21.peg.2648"/>
<dbReference type="HOGENOM" id="CLU_087843_4_0_5"/>
<dbReference type="PhylomeDB" id="Q8G1E7"/>
<dbReference type="Proteomes" id="UP000007104">
    <property type="component" value="Chromosome I"/>
</dbReference>
<dbReference type="GO" id="GO:0005829">
    <property type="term" value="C:cytosol"/>
    <property type="evidence" value="ECO:0007669"/>
    <property type="project" value="TreeGrafter"/>
</dbReference>
<dbReference type="GO" id="GO:0003723">
    <property type="term" value="F:RNA binding"/>
    <property type="evidence" value="ECO:0007669"/>
    <property type="project" value="UniProtKB-UniRule"/>
</dbReference>
<dbReference type="GO" id="GO:0006353">
    <property type="term" value="P:DNA-templated transcription termination"/>
    <property type="evidence" value="ECO:0007669"/>
    <property type="project" value="UniProtKB-UniRule"/>
</dbReference>
<dbReference type="GO" id="GO:0031564">
    <property type="term" value="P:transcription antitermination"/>
    <property type="evidence" value="ECO:0007669"/>
    <property type="project" value="UniProtKB-KW"/>
</dbReference>
<dbReference type="Gene3D" id="1.10.940.10">
    <property type="entry name" value="NusB-like"/>
    <property type="match status" value="1"/>
</dbReference>
<dbReference type="HAMAP" id="MF_00073">
    <property type="entry name" value="NusB"/>
    <property type="match status" value="1"/>
</dbReference>
<dbReference type="InterPro" id="IPR035926">
    <property type="entry name" value="NusB-like_sf"/>
</dbReference>
<dbReference type="InterPro" id="IPR011605">
    <property type="entry name" value="NusB_fam"/>
</dbReference>
<dbReference type="InterPro" id="IPR006027">
    <property type="entry name" value="NusB_RsmB_TIM44"/>
</dbReference>
<dbReference type="NCBIfam" id="TIGR01951">
    <property type="entry name" value="nusB"/>
    <property type="match status" value="1"/>
</dbReference>
<dbReference type="PANTHER" id="PTHR11078:SF3">
    <property type="entry name" value="ANTITERMINATION NUSB DOMAIN-CONTAINING PROTEIN"/>
    <property type="match status" value="1"/>
</dbReference>
<dbReference type="PANTHER" id="PTHR11078">
    <property type="entry name" value="N UTILIZATION SUBSTANCE PROTEIN B-RELATED"/>
    <property type="match status" value="1"/>
</dbReference>
<dbReference type="Pfam" id="PF01029">
    <property type="entry name" value="NusB"/>
    <property type="match status" value="1"/>
</dbReference>
<dbReference type="SUPFAM" id="SSF48013">
    <property type="entry name" value="NusB-like"/>
    <property type="match status" value="1"/>
</dbReference>
<comment type="function">
    <text evidence="1">Involved in transcription antitermination. Required for transcription of ribosomal RNA (rRNA) genes. Binds specifically to the boxA antiterminator sequence of the ribosomal RNA (rrn) operons.</text>
</comment>
<comment type="similarity">
    <text evidence="1">Belongs to the NusB family.</text>
</comment>
<reference key="1">
    <citation type="journal article" date="2002" name="Proc. Natl. Acad. Sci. U.S.A.">
        <title>The Brucella suis genome reveals fundamental similarities between animal and plant pathogens and symbionts.</title>
        <authorList>
            <person name="Paulsen I.T."/>
            <person name="Seshadri R."/>
            <person name="Nelson K.E."/>
            <person name="Eisen J.A."/>
            <person name="Heidelberg J.F."/>
            <person name="Read T.D."/>
            <person name="Dodson R.J."/>
            <person name="Umayam L.A."/>
            <person name="Brinkac L.M."/>
            <person name="Beanan M.J."/>
            <person name="Daugherty S.C."/>
            <person name="DeBoy R.T."/>
            <person name="Durkin A.S."/>
            <person name="Kolonay J.F."/>
            <person name="Madupu R."/>
            <person name="Nelson W.C."/>
            <person name="Ayodeji B."/>
            <person name="Kraul M."/>
            <person name="Shetty J."/>
            <person name="Malek J.A."/>
            <person name="Van Aken S.E."/>
            <person name="Riedmuller S."/>
            <person name="Tettelin H."/>
            <person name="Gill S.R."/>
            <person name="White O."/>
            <person name="Salzberg S.L."/>
            <person name="Hoover D.L."/>
            <person name="Lindler L.E."/>
            <person name="Halling S.M."/>
            <person name="Boyle S.M."/>
            <person name="Fraser C.M."/>
        </authorList>
    </citation>
    <scope>NUCLEOTIDE SEQUENCE [LARGE SCALE GENOMIC DNA]</scope>
    <source>
        <strain>1330</strain>
    </source>
</reference>
<reference key="2">
    <citation type="journal article" date="2011" name="J. Bacteriol.">
        <title>Revised genome sequence of Brucella suis 1330.</title>
        <authorList>
            <person name="Tae H."/>
            <person name="Shallom S."/>
            <person name="Settlage R."/>
            <person name="Preston D."/>
            <person name="Adams L.G."/>
            <person name="Garner H.R."/>
        </authorList>
    </citation>
    <scope>NUCLEOTIDE SEQUENCE [LARGE SCALE GENOMIC DNA]</scope>
    <source>
        <strain>1330</strain>
    </source>
</reference>
<evidence type="ECO:0000255" key="1">
    <source>
        <dbReference type="HAMAP-Rule" id="MF_00073"/>
    </source>
</evidence>